<evidence type="ECO:0000250" key="1"/>
<evidence type="ECO:0000255" key="2"/>
<evidence type="ECO:0000269" key="3">
    <source>
    </source>
</evidence>
<evidence type="ECO:0000269" key="4">
    <source>
    </source>
</evidence>
<evidence type="ECO:0000269" key="5">
    <source>
    </source>
</evidence>
<evidence type="ECO:0000269" key="6">
    <source>
    </source>
</evidence>
<evidence type="ECO:0000305" key="7"/>
<evidence type="ECO:0007829" key="8">
    <source>
        <dbReference type="PDB" id="2FGT"/>
    </source>
</evidence>
<accession>Q794W0</accession>
<accession>Q45613</accession>
<reference key="1">
    <citation type="journal article" date="1997" name="DNA Res.">
        <title>Sequence analysis of the 36-kb region between gntZ and trnY genes of Bacillus subtilis genome.</title>
        <authorList>
            <person name="Kasahara Y."/>
            <person name="Nakai S."/>
            <person name="Ogasawara N."/>
        </authorList>
    </citation>
    <scope>NUCLEOTIDE SEQUENCE [GENOMIC DNA]</scope>
    <source>
        <strain>168</strain>
    </source>
</reference>
<reference key="2">
    <citation type="journal article" date="1997" name="Nature">
        <title>The complete genome sequence of the Gram-positive bacterium Bacillus subtilis.</title>
        <authorList>
            <person name="Kunst F."/>
            <person name="Ogasawara N."/>
            <person name="Moszer I."/>
            <person name="Albertini A.M."/>
            <person name="Alloni G."/>
            <person name="Azevedo V."/>
            <person name="Bertero M.G."/>
            <person name="Bessieres P."/>
            <person name="Bolotin A."/>
            <person name="Borchert S."/>
            <person name="Borriss R."/>
            <person name="Boursier L."/>
            <person name="Brans A."/>
            <person name="Braun M."/>
            <person name="Brignell S.C."/>
            <person name="Bron S."/>
            <person name="Brouillet S."/>
            <person name="Bruschi C.V."/>
            <person name="Caldwell B."/>
            <person name="Capuano V."/>
            <person name="Carter N.M."/>
            <person name="Choi S.-K."/>
            <person name="Codani J.-J."/>
            <person name="Connerton I.F."/>
            <person name="Cummings N.J."/>
            <person name="Daniel R.A."/>
            <person name="Denizot F."/>
            <person name="Devine K.M."/>
            <person name="Duesterhoeft A."/>
            <person name="Ehrlich S.D."/>
            <person name="Emmerson P.T."/>
            <person name="Entian K.-D."/>
            <person name="Errington J."/>
            <person name="Fabret C."/>
            <person name="Ferrari E."/>
            <person name="Foulger D."/>
            <person name="Fritz C."/>
            <person name="Fujita M."/>
            <person name="Fujita Y."/>
            <person name="Fuma S."/>
            <person name="Galizzi A."/>
            <person name="Galleron N."/>
            <person name="Ghim S.-Y."/>
            <person name="Glaser P."/>
            <person name="Goffeau A."/>
            <person name="Golightly E.J."/>
            <person name="Grandi G."/>
            <person name="Guiseppi G."/>
            <person name="Guy B.J."/>
            <person name="Haga K."/>
            <person name="Haiech J."/>
            <person name="Harwood C.R."/>
            <person name="Henaut A."/>
            <person name="Hilbert H."/>
            <person name="Holsappel S."/>
            <person name="Hosono S."/>
            <person name="Hullo M.-F."/>
            <person name="Itaya M."/>
            <person name="Jones L.-M."/>
            <person name="Joris B."/>
            <person name="Karamata D."/>
            <person name="Kasahara Y."/>
            <person name="Klaerr-Blanchard M."/>
            <person name="Klein C."/>
            <person name="Kobayashi Y."/>
            <person name="Koetter P."/>
            <person name="Koningstein G."/>
            <person name="Krogh S."/>
            <person name="Kumano M."/>
            <person name="Kurita K."/>
            <person name="Lapidus A."/>
            <person name="Lardinois S."/>
            <person name="Lauber J."/>
            <person name="Lazarevic V."/>
            <person name="Lee S.-M."/>
            <person name="Levine A."/>
            <person name="Liu H."/>
            <person name="Masuda S."/>
            <person name="Mauel C."/>
            <person name="Medigue C."/>
            <person name="Medina N."/>
            <person name="Mellado R.P."/>
            <person name="Mizuno M."/>
            <person name="Moestl D."/>
            <person name="Nakai S."/>
            <person name="Noback M."/>
            <person name="Noone D."/>
            <person name="O'Reilly M."/>
            <person name="Ogawa K."/>
            <person name="Ogiwara A."/>
            <person name="Oudega B."/>
            <person name="Park S.-H."/>
            <person name="Parro V."/>
            <person name="Pohl T.M."/>
            <person name="Portetelle D."/>
            <person name="Porwollik S."/>
            <person name="Prescott A.M."/>
            <person name="Presecan E."/>
            <person name="Pujic P."/>
            <person name="Purnelle B."/>
            <person name="Rapoport G."/>
            <person name="Rey M."/>
            <person name="Reynolds S."/>
            <person name="Rieger M."/>
            <person name="Rivolta C."/>
            <person name="Rocha E."/>
            <person name="Roche B."/>
            <person name="Rose M."/>
            <person name="Sadaie Y."/>
            <person name="Sato T."/>
            <person name="Scanlan E."/>
            <person name="Schleich S."/>
            <person name="Schroeter R."/>
            <person name="Scoffone F."/>
            <person name="Sekiguchi J."/>
            <person name="Sekowska A."/>
            <person name="Seror S.J."/>
            <person name="Serror P."/>
            <person name="Shin B.-S."/>
            <person name="Soldo B."/>
            <person name="Sorokin A."/>
            <person name="Tacconi E."/>
            <person name="Takagi T."/>
            <person name="Takahashi H."/>
            <person name="Takemaru K."/>
            <person name="Takeuchi M."/>
            <person name="Tamakoshi A."/>
            <person name="Tanaka T."/>
            <person name="Terpstra P."/>
            <person name="Tognoni A."/>
            <person name="Tosato V."/>
            <person name="Uchiyama S."/>
            <person name="Vandenbol M."/>
            <person name="Vannier F."/>
            <person name="Vassarotti A."/>
            <person name="Viari A."/>
            <person name="Wambutt R."/>
            <person name="Wedler E."/>
            <person name="Wedler H."/>
            <person name="Weitzenegger T."/>
            <person name="Winters P."/>
            <person name="Wipat A."/>
            <person name="Yamamoto H."/>
            <person name="Yamane K."/>
            <person name="Yasumoto K."/>
            <person name="Yata K."/>
            <person name="Yoshida K."/>
            <person name="Yoshikawa H.-F."/>
            <person name="Zumstein E."/>
            <person name="Yoshikawa H."/>
            <person name="Danchin A."/>
        </authorList>
    </citation>
    <scope>NUCLEOTIDE SEQUENCE [LARGE SCALE GENOMIC DNA]</scope>
    <source>
        <strain>168</strain>
    </source>
</reference>
<reference key="3">
    <citation type="journal article" date="2005" name="J. Bacteriol.">
        <title>YycH regulates the activity of the essential YycFG two-component system in Bacillus subtilis.</title>
        <authorList>
            <person name="Szurmant H."/>
            <person name="Nelson K."/>
            <person name="Kim E.-J."/>
            <person name="Perego M."/>
            <person name="Hoch J.A."/>
        </authorList>
    </citation>
    <scope>REGULATION OF WALR/WALK</scope>
    <scope>DISRUPTION PHENOTYPE</scope>
</reference>
<reference key="4">
    <citation type="journal article" date="2007" name="J. Bacteriol.">
        <title>YycH and YycI interact to regulate the essential YycFG two-component system in Bacillus subtilis.</title>
        <authorList>
            <person name="Szurmant H."/>
            <person name="Mohan M.A."/>
            <person name="Imus P.M."/>
            <person name="Hoch J.A."/>
        </authorList>
    </citation>
    <scope>FUNCTION</scope>
    <scope>TOPOLOGY</scope>
    <scope>DISRUPTION PHENOTYPE</scope>
    <scope>INTERACTION WITH WALK AND YYCI</scope>
</reference>
<reference key="5">
    <citation type="journal article" date="2008" name="Proc. Natl. Acad. Sci. U.S.A.">
        <title>An essential sensor histidine kinase controlled by transmembrane helix interactions with its auxiliary proteins.</title>
        <authorList>
            <person name="Szurmant H."/>
            <person name="Bu L."/>
            <person name="Brooks C.L. III"/>
            <person name="Hoch J.A."/>
        </authorList>
    </citation>
    <scope>FUNCTION</scope>
    <scope>MUTAGENESIS OF THR-22 AND TRP-26</scope>
    <scope>DOMAIN</scope>
</reference>
<reference key="6">
    <citation type="journal article" date="2006" name="Protein Sci.">
        <title>The crystal structure of YycH involved in the regulation of the essential YycFG two-component system in Bacillus subtilis reveals a novel tertiary structure.</title>
        <authorList>
            <person name="Szurmant H."/>
            <person name="Zhao H."/>
            <person name="Mohan M.A."/>
            <person name="Hoch J.A."/>
            <person name="Varughese K.I."/>
        </authorList>
    </citation>
    <scope>X-RAY CRYSTALLOGRAPHY (2.3 ANGSTROMS) OF 39-458 IN COMPLEX WITH CALCIUM IONS</scope>
</reference>
<feature type="chain" id="PRO_0000066553" description="Two-component system WalR/WalK regulatory protein YycH">
    <location>
        <begin position="1"/>
        <end position="455"/>
    </location>
</feature>
<feature type="topological domain" description="Cytoplasmic" evidence="2">
    <location>
        <begin position="1"/>
        <end position="7"/>
    </location>
</feature>
<feature type="transmembrane region" description="Helical" evidence="2">
    <location>
        <begin position="8"/>
        <end position="28"/>
    </location>
</feature>
<feature type="topological domain" description="Extracellular" evidence="2">
    <location>
        <begin position="29"/>
        <end position="455"/>
    </location>
</feature>
<feature type="binding site">
    <location>
        <position position="69"/>
    </location>
    <ligand>
        <name>Ca(2+)</name>
        <dbReference type="ChEBI" id="CHEBI:29108"/>
    </ligand>
</feature>
<feature type="binding site">
    <location>
        <position position="70"/>
    </location>
    <ligand>
        <name>Ca(2+)</name>
        <dbReference type="ChEBI" id="CHEBI:29108"/>
    </ligand>
</feature>
<feature type="binding site">
    <location>
        <position position="115"/>
    </location>
    <ligand>
        <name>Ca(2+)</name>
        <dbReference type="ChEBI" id="CHEBI:29108"/>
    </ligand>
</feature>
<feature type="binding site">
    <location>
        <position position="117"/>
    </location>
    <ligand>
        <name>Ca(2+)</name>
        <dbReference type="ChEBI" id="CHEBI:29108"/>
    </ligand>
</feature>
<feature type="binding site">
    <location>
        <position position="119"/>
    </location>
    <ligand>
        <name>Ca(2+)</name>
        <dbReference type="ChEBI" id="CHEBI:29108"/>
    </ligand>
</feature>
<feature type="mutagenesis site" description="Slight induction of WalK-dependent genes." evidence="6">
    <original>T</original>
    <variation>F</variation>
    <location>
        <position position="22"/>
    </location>
</feature>
<feature type="mutagenesis site" description="Slight induction of WalK-dependent genes." evidence="6">
    <original>W</original>
    <variation>A</variation>
    <location>
        <position position="26"/>
    </location>
</feature>
<feature type="helix" evidence="8">
    <location>
        <begin position="56"/>
        <end position="59"/>
    </location>
</feature>
<feature type="strand" evidence="8">
    <location>
        <begin position="63"/>
        <end position="69"/>
    </location>
</feature>
<feature type="strand" evidence="8">
    <location>
        <begin position="72"/>
        <end position="75"/>
    </location>
</feature>
<feature type="helix" evidence="8">
    <location>
        <begin position="79"/>
        <end position="88"/>
    </location>
</feature>
<feature type="helix" evidence="8">
    <location>
        <begin position="89"/>
        <end position="91"/>
    </location>
</feature>
<feature type="strand" evidence="8">
    <location>
        <begin position="92"/>
        <end position="99"/>
    </location>
</feature>
<feature type="helix" evidence="8">
    <location>
        <begin position="101"/>
        <end position="103"/>
    </location>
</feature>
<feature type="helix" evidence="8">
    <location>
        <begin position="106"/>
        <end position="113"/>
    </location>
</feature>
<feature type="strand" evidence="8">
    <location>
        <begin position="122"/>
        <end position="132"/>
    </location>
</feature>
<feature type="helix" evidence="8">
    <location>
        <begin position="133"/>
        <end position="140"/>
    </location>
</feature>
<feature type="strand" evidence="8">
    <location>
        <begin position="151"/>
        <end position="159"/>
    </location>
</feature>
<feature type="strand" evidence="8">
    <location>
        <begin position="163"/>
        <end position="172"/>
    </location>
</feature>
<feature type="turn" evidence="8">
    <location>
        <begin position="173"/>
        <end position="176"/>
    </location>
</feature>
<feature type="strand" evidence="8">
    <location>
        <begin position="177"/>
        <end position="184"/>
    </location>
</feature>
<feature type="helix" evidence="8">
    <location>
        <begin position="188"/>
        <end position="198"/>
    </location>
</feature>
<feature type="helix" evidence="8">
    <location>
        <begin position="199"/>
        <end position="201"/>
    </location>
</feature>
<feature type="strand" evidence="8">
    <location>
        <begin position="204"/>
        <end position="210"/>
    </location>
</feature>
<feature type="turn" evidence="8">
    <location>
        <begin position="211"/>
        <end position="213"/>
    </location>
</feature>
<feature type="strand" evidence="8">
    <location>
        <begin position="214"/>
        <end position="221"/>
    </location>
</feature>
<feature type="strand" evidence="8">
    <location>
        <begin position="223"/>
        <end position="226"/>
    </location>
</feature>
<feature type="helix" evidence="8">
    <location>
        <begin position="237"/>
        <end position="244"/>
    </location>
</feature>
<feature type="helix" evidence="8">
    <location>
        <begin position="248"/>
        <end position="250"/>
    </location>
</feature>
<feature type="strand" evidence="8">
    <location>
        <begin position="262"/>
        <end position="264"/>
    </location>
</feature>
<feature type="strand" evidence="8">
    <location>
        <begin position="269"/>
        <end position="273"/>
    </location>
</feature>
<feature type="turn" evidence="8">
    <location>
        <begin position="274"/>
        <end position="277"/>
    </location>
</feature>
<feature type="strand" evidence="8">
    <location>
        <begin position="278"/>
        <end position="282"/>
    </location>
</feature>
<feature type="helix" evidence="8">
    <location>
        <begin position="294"/>
        <end position="307"/>
    </location>
</feature>
<feature type="strand" evidence="8">
    <location>
        <begin position="315"/>
        <end position="320"/>
    </location>
</feature>
<feature type="strand" evidence="8">
    <location>
        <begin position="326"/>
        <end position="332"/>
    </location>
</feature>
<feature type="strand" evidence="8">
    <location>
        <begin position="335"/>
        <end position="339"/>
    </location>
</feature>
<feature type="strand" evidence="8">
    <location>
        <begin position="341"/>
        <end position="343"/>
    </location>
</feature>
<feature type="strand" evidence="8">
    <location>
        <begin position="350"/>
        <end position="355"/>
    </location>
</feature>
<feature type="strand" evidence="8">
    <location>
        <begin position="357"/>
        <end position="367"/>
    </location>
</feature>
<feature type="strand" evidence="8">
    <location>
        <begin position="379"/>
        <end position="382"/>
    </location>
</feature>
<feature type="helix" evidence="8">
    <location>
        <begin position="386"/>
        <end position="393"/>
    </location>
</feature>
<feature type="helix" evidence="8">
    <location>
        <begin position="400"/>
        <end position="402"/>
    </location>
</feature>
<feature type="strand" evidence="8">
    <location>
        <begin position="403"/>
        <end position="412"/>
    </location>
</feature>
<feature type="strand" evidence="8">
    <location>
        <begin position="426"/>
        <end position="433"/>
    </location>
</feature>
<feature type="strand" evidence="8">
    <location>
        <begin position="436"/>
        <end position="441"/>
    </location>
</feature>
<keyword id="KW-0002">3D-structure</keyword>
<keyword id="KW-0106">Calcium</keyword>
<keyword id="KW-1003">Cell membrane</keyword>
<keyword id="KW-0472">Membrane</keyword>
<keyword id="KW-0479">Metal-binding</keyword>
<keyword id="KW-1185">Reference proteome</keyword>
<keyword id="KW-0812">Transmembrane</keyword>
<keyword id="KW-1133">Transmembrane helix</keyword>
<comment type="function">
    <text evidence="5 6">Together with YycI, regulates the activity of the two-component system WalR/WalK.</text>
</comment>
<comment type="subunit">
    <text evidence="1 4 5">Homodimer (By similarity). Interacts with WalK and YycI.</text>
</comment>
<comment type="subcellular location">
    <subcellularLocation>
        <location evidence="7">Cell membrane</location>
        <topology evidence="7">Single-pass membrane protein</topology>
    </subcellularLocation>
</comment>
<comment type="domain">
    <text evidence="6">The transmembrane region is required for the regulation of WalK activity.</text>
</comment>
<comment type="disruption phenotype">
    <text evidence="3 5">No cellular levels increase of either WalK or WalR. Induction of WalR-dependent gene expression. Cell wall defect.</text>
</comment>
<comment type="sequence caution" evidence="7">
    <conflict type="erroneous initiation">
        <sequence resource="EMBL-CDS" id="BAA11298"/>
    </conflict>
</comment>
<organism>
    <name type="scientific">Bacillus subtilis (strain 168)</name>
    <dbReference type="NCBI Taxonomy" id="224308"/>
    <lineage>
        <taxon>Bacteria</taxon>
        <taxon>Bacillati</taxon>
        <taxon>Bacillota</taxon>
        <taxon>Bacilli</taxon>
        <taxon>Bacillales</taxon>
        <taxon>Bacillaceae</taxon>
        <taxon>Bacillus</taxon>
    </lineage>
</organism>
<proteinExistence type="evidence at protein level"/>
<gene>
    <name type="primary">yycH</name>
    <name type="ordered locus">BSU40390</name>
</gene>
<protein>
    <recommendedName>
        <fullName>Two-component system WalR/WalK regulatory protein YycH</fullName>
    </recommendedName>
</protein>
<sequence length="455" mass="52215">MKRENIKTILLTVLVVISLVFTWGIWTFQPNFSEGSSSTESTVRVKHKIEKTTQKLSETVRPRDMFIHDDGAHYKVDDNALYEEIWSDLPHWDVKGIKDISDQYDKAGFKSWFYGIGGSEAKLDLQFSDTIPIDIFQTLFKWSNQSFEYSSFDHILIPFNETKANKKIYLVSYSKQLILEVTVESANYRNIMNDLKNRQSNMPAFSLFSIGSKKEFLLPNKPLTMDKKEFVTESIKTNTFKQALFSDPSIVREDSNYNNRNVLTDGISRLDVNLSQRQVQFQQRNLVQSTSYQTGELIKKSQKYLEDTGSWTDHYQFFNINDSQQLSFYIFMDQIPVINSTAKPFGATSAITVQWANDDILSYKRPNYSLGTNPIKTSETELMGGSEVKMLLSKQTAYDTDKIDQIFLAYQLVSTSTNDDPLVELEPVWAMKVNGKIVPITKDLLRKEGANSGVE</sequence>
<name>YYCH_BACSU</name>
<dbReference type="EMBL" id="D78193">
    <property type="protein sequence ID" value="BAA11298.1"/>
    <property type="status" value="ALT_INIT"/>
    <property type="molecule type" value="Genomic_DNA"/>
</dbReference>
<dbReference type="EMBL" id="AL009126">
    <property type="protein sequence ID" value="CAB16076.1"/>
    <property type="molecule type" value="Genomic_DNA"/>
</dbReference>
<dbReference type="PIR" id="G70089">
    <property type="entry name" value="G70089"/>
</dbReference>
<dbReference type="RefSeq" id="WP_003242498.1">
    <property type="nucleotide sequence ID" value="NZ_OZ025638.1"/>
</dbReference>
<dbReference type="PDB" id="2FGT">
    <property type="method" value="X-ray"/>
    <property type="resolution" value="2.30 A"/>
    <property type="chains" value="A=39-455"/>
</dbReference>
<dbReference type="PDBsum" id="2FGT"/>
<dbReference type="SMR" id="Q794W0"/>
<dbReference type="FunCoup" id="Q794W0">
    <property type="interactions" value="71"/>
</dbReference>
<dbReference type="STRING" id="224308.BSU40390"/>
<dbReference type="PaxDb" id="224308-BSU40390"/>
<dbReference type="EnsemblBacteria" id="CAB16076">
    <property type="protein sequence ID" value="CAB16076"/>
    <property type="gene ID" value="BSU_40390"/>
</dbReference>
<dbReference type="GeneID" id="937790"/>
<dbReference type="KEGG" id="bsu:BSU40390"/>
<dbReference type="PATRIC" id="fig|224308.179.peg.4372"/>
<dbReference type="eggNOG" id="COG4863">
    <property type="taxonomic scope" value="Bacteria"/>
</dbReference>
<dbReference type="InParanoid" id="Q794W0"/>
<dbReference type="OrthoDB" id="2382185at2"/>
<dbReference type="PhylomeDB" id="Q794W0"/>
<dbReference type="BioCyc" id="BSUB:BSU40390-MONOMER"/>
<dbReference type="EvolutionaryTrace" id="Q794W0"/>
<dbReference type="Proteomes" id="UP000001570">
    <property type="component" value="Chromosome"/>
</dbReference>
<dbReference type="GO" id="GO:0005886">
    <property type="term" value="C:plasma membrane"/>
    <property type="evidence" value="ECO:0007669"/>
    <property type="project" value="UniProtKB-SubCell"/>
</dbReference>
<dbReference type="GO" id="GO:0046872">
    <property type="term" value="F:metal ion binding"/>
    <property type="evidence" value="ECO:0007669"/>
    <property type="project" value="UniProtKB-KW"/>
</dbReference>
<dbReference type="CDD" id="cd15785">
    <property type="entry name" value="YycH_N_like"/>
    <property type="match status" value="1"/>
</dbReference>
<dbReference type="Gene3D" id="3.10.450.310">
    <property type="match status" value="1"/>
</dbReference>
<dbReference type="Gene3D" id="3.30.310.160">
    <property type="entry name" value="YycH protein, domain 2"/>
    <property type="match status" value="1"/>
</dbReference>
<dbReference type="InterPro" id="IPR009996">
    <property type="entry name" value="YycH"/>
</dbReference>
<dbReference type="InterPro" id="IPR042274">
    <property type="entry name" value="YycH/YycI_2"/>
</dbReference>
<dbReference type="Pfam" id="PF07435">
    <property type="entry name" value="YycH"/>
    <property type="match status" value="1"/>
</dbReference>